<organism>
    <name type="scientific">Xenopus laevis</name>
    <name type="common">African clawed frog</name>
    <dbReference type="NCBI Taxonomy" id="8355"/>
    <lineage>
        <taxon>Eukaryota</taxon>
        <taxon>Metazoa</taxon>
        <taxon>Chordata</taxon>
        <taxon>Craniata</taxon>
        <taxon>Vertebrata</taxon>
        <taxon>Euteleostomi</taxon>
        <taxon>Amphibia</taxon>
        <taxon>Batrachia</taxon>
        <taxon>Anura</taxon>
        <taxon>Pipoidea</taxon>
        <taxon>Pipidae</taxon>
        <taxon>Xenopodinae</taxon>
        <taxon>Xenopus</taxon>
        <taxon>Xenopus</taxon>
    </lineage>
</organism>
<evidence type="ECO:0000250" key="1">
    <source>
        <dbReference type="UniProtKB" id="O43809"/>
    </source>
</evidence>
<evidence type="ECO:0000250" key="2">
    <source>
        <dbReference type="UniProtKB" id="Q9CQF3"/>
    </source>
</evidence>
<evidence type="ECO:0000255" key="3">
    <source>
        <dbReference type="PROSITE-ProRule" id="PRU00794"/>
    </source>
</evidence>
<evidence type="ECO:0000305" key="4"/>
<feature type="chain" id="PRO_0000057155" description="Cleavage and polyadenylation specificity factor subunit 5">
    <location>
        <begin position="1"/>
        <end position="227"/>
    </location>
</feature>
<feature type="domain" description="Nudix hydrolase" evidence="3">
    <location>
        <begin position="76"/>
        <end position="201"/>
    </location>
</feature>
<feature type="region of interest" description="Interaction with RNA" evidence="1">
    <location>
        <begin position="102"/>
        <end position="104"/>
    </location>
</feature>
<feature type="short sequence motif" description="Nudix box">
    <location>
        <begin position="109"/>
        <end position="130"/>
    </location>
</feature>
<feature type="site" description="Interaction with RNA" evidence="1">
    <location>
        <position position="55"/>
    </location>
</feature>
<feature type="site" description="Interaction with RNA" evidence="1">
    <location>
        <position position="63"/>
    </location>
</feature>
<comment type="function">
    <text evidence="1 2">Component of the cleavage factor Im (CFIm) complex that functions as an activator of the pre-mRNA 3'-end cleavage and polyadenylation processing required for the maturation of pre-mRNA into functional mRNAs. CFIm contributes to the recruitment of multiprotein complexes on specific sequences on the pre-mRNA 3'-end, so called cleavage and polyadenylation signals (pA signals). Most pre-mRNAs contain multiple pA signals, resulting in alternative cleavage and polyadenylation (APA) producing mRNAs with variable 3'-end formation. The CFIm complex acts as a key regulator of cleavage and polyadenylation site choice during APA through its binding to 5'-UGUA-3' elements localized in the 3'-untranslated region (UTR) for a huge number of pre-mRNAs. Binds to 5'-UGUA-3' elements localized upstream of pA signals that act as enhancers of pre-mRNA 3'-end processing. The homodimer mediates simultaneous sequence-specific recognition of two 5'-UGUA-3' elements within the pre-mRNA. Plays a role in somatic cell fate transitions and pluripotency by regulating widespread changes in gene expression through an APA-dependent function. Binds to chromatin. Binds to, but does not hydrolyze mono- and di-adenosine nucleotides.</text>
</comment>
<comment type="subunit">
    <text evidence="1">Homodimer (via N- and C-terminus); binds RNA as homodimer. Component of the cleavage factor Im (CFIm) complex.</text>
</comment>
<comment type="subcellular location">
    <subcellularLocation>
        <location evidence="1">Nucleus</location>
    </subcellularLocation>
    <subcellularLocation>
        <location evidence="1">Cytoplasm</location>
    </subcellularLocation>
    <text evidence="1">Shuttles between the nucleus and the cytoplasm.</text>
</comment>
<comment type="similarity">
    <text evidence="4">Belongs to the Nudix hydrolase family. CPSF5 subfamily.</text>
</comment>
<comment type="caution">
    <text evidence="4">Lacks the conserved metal-binding residues in the NUDIX motif and is not expected to have hydrolase activity.</text>
</comment>
<sequence>MSVLPPNRSQTGWPRGVNQFGNKYLQQTKPLTLERTINLYPLTNYTFGTKEPLYEKDSSVAARFQRMREEFDKIGMRRTVEGVLIVHEHRLPHVLLLQLGTTFFKLPGGELNPGEDEVEGLKRLMTEILGRQDGVQQDWVIDDCIGNWWRPNFEPPQYPYIPAHITKPKEHKKLFLVQLQEKALFAVPKNYKLVAAPLFELYDNAPGYGPIISSLPQLLSRFNFIYN</sequence>
<name>CPSF5_XENLA</name>
<gene>
    <name evidence="1" type="primary">nudt21</name>
    <name evidence="1" type="synonym">cpsf5</name>
</gene>
<protein>
    <recommendedName>
        <fullName evidence="1">Cleavage and polyadenylation specificity factor subunit 5</fullName>
    </recommendedName>
    <alternativeName>
        <fullName evidence="1">Nudix hydrolase 21</fullName>
    </alternativeName>
</protein>
<proteinExistence type="evidence at transcript level"/>
<reference key="1">
    <citation type="submission" date="2004-06" db="EMBL/GenBank/DDBJ databases">
        <authorList>
            <consortium name="NIH - Xenopus Gene Collection (XGC) project"/>
        </authorList>
    </citation>
    <scope>NUCLEOTIDE SEQUENCE [LARGE SCALE MRNA]</scope>
    <source>
        <tissue>Eye</tissue>
    </source>
</reference>
<dbReference type="EMBL" id="BC075235">
    <property type="protein sequence ID" value="AAH75235.1"/>
    <property type="molecule type" value="mRNA"/>
</dbReference>
<dbReference type="RefSeq" id="NP_001086401.1">
    <property type="nucleotide sequence ID" value="NM_001092932.1"/>
</dbReference>
<dbReference type="SMR" id="Q6DJE4"/>
<dbReference type="BioGRID" id="102993">
    <property type="interactions" value="1"/>
</dbReference>
<dbReference type="DNASU" id="444830"/>
<dbReference type="GeneID" id="444830"/>
<dbReference type="KEGG" id="xla:444830"/>
<dbReference type="AGR" id="Xenbase:XB-GENE-921424"/>
<dbReference type="CTD" id="444830"/>
<dbReference type="Xenbase" id="XB-GENE-921424">
    <property type="gene designation" value="nudt21.L"/>
</dbReference>
<dbReference type="OMA" id="NDEWEIG"/>
<dbReference type="OrthoDB" id="277288at2759"/>
<dbReference type="Proteomes" id="UP000186698">
    <property type="component" value="Chromosome 4L"/>
</dbReference>
<dbReference type="Bgee" id="444830">
    <property type="expression patterns" value="Expressed in egg cell and 19 other cell types or tissues"/>
</dbReference>
<dbReference type="GO" id="GO:0005737">
    <property type="term" value="C:cytoplasm"/>
    <property type="evidence" value="ECO:0000250"/>
    <property type="project" value="UniProtKB"/>
</dbReference>
<dbReference type="GO" id="GO:0005849">
    <property type="term" value="C:mRNA cleavage factor complex"/>
    <property type="evidence" value="ECO:0000250"/>
    <property type="project" value="UniProtKB"/>
</dbReference>
<dbReference type="GO" id="GO:0005634">
    <property type="term" value="C:nucleus"/>
    <property type="evidence" value="ECO:0000250"/>
    <property type="project" value="UniProtKB"/>
</dbReference>
<dbReference type="GO" id="GO:0042382">
    <property type="term" value="C:paraspeckles"/>
    <property type="evidence" value="ECO:0000250"/>
    <property type="project" value="UniProtKB"/>
</dbReference>
<dbReference type="GO" id="GO:0042802">
    <property type="term" value="F:identical protein binding"/>
    <property type="evidence" value="ECO:0000250"/>
    <property type="project" value="UniProtKB"/>
</dbReference>
<dbReference type="GO" id="GO:0035925">
    <property type="term" value="F:mRNA 3'-UTR AU-rich region binding"/>
    <property type="evidence" value="ECO:0000250"/>
    <property type="project" value="UniProtKB"/>
</dbReference>
<dbReference type="GO" id="GO:0003729">
    <property type="term" value="F:mRNA binding"/>
    <property type="evidence" value="ECO:0000250"/>
    <property type="project" value="UniProtKB"/>
</dbReference>
<dbReference type="GO" id="GO:0030154">
    <property type="term" value="P:cell differentiation"/>
    <property type="evidence" value="ECO:0007669"/>
    <property type="project" value="UniProtKB-KW"/>
</dbReference>
<dbReference type="GO" id="GO:0180010">
    <property type="term" value="P:co-transcriptional mRNA 3'-end processing, cleavage and polyadenylation pathway"/>
    <property type="evidence" value="ECO:0000250"/>
    <property type="project" value="UniProtKB"/>
</dbReference>
<dbReference type="GO" id="GO:0031124">
    <property type="term" value="P:mRNA 3'-end processing"/>
    <property type="evidence" value="ECO:0000250"/>
    <property type="project" value="UniProtKB"/>
</dbReference>
<dbReference type="GO" id="GO:0110104">
    <property type="term" value="P:mRNA alternative polyadenylation"/>
    <property type="evidence" value="ECO:0000250"/>
    <property type="project" value="UniProtKB"/>
</dbReference>
<dbReference type="GO" id="GO:0006397">
    <property type="term" value="P:mRNA processing"/>
    <property type="evidence" value="ECO:0000250"/>
    <property type="project" value="UniProtKB"/>
</dbReference>
<dbReference type="GO" id="GO:2000975">
    <property type="term" value="P:positive regulation of pro-B cell differentiation"/>
    <property type="evidence" value="ECO:0000250"/>
    <property type="project" value="UniProtKB"/>
</dbReference>
<dbReference type="GO" id="GO:2000738">
    <property type="term" value="P:positive regulation of stem cell differentiation"/>
    <property type="evidence" value="ECO:0000250"/>
    <property type="project" value="UniProtKB"/>
</dbReference>
<dbReference type="GO" id="GO:0010608">
    <property type="term" value="P:post-transcriptional regulation of gene expression"/>
    <property type="evidence" value="ECO:0000250"/>
    <property type="project" value="UniProtKB"/>
</dbReference>
<dbReference type="GO" id="GO:0051290">
    <property type="term" value="P:protein heterotetramerization"/>
    <property type="evidence" value="ECO:0000250"/>
    <property type="project" value="UniProtKB"/>
</dbReference>
<dbReference type="CDD" id="cd18871">
    <property type="entry name" value="NUDIX_Cfim25_Nudt21"/>
    <property type="match status" value="1"/>
</dbReference>
<dbReference type="FunFam" id="3.90.79.10:FF:000008">
    <property type="entry name" value="cleavage and polyadenylation specificity factor subunit 5"/>
    <property type="match status" value="1"/>
</dbReference>
<dbReference type="Gene3D" id="3.90.79.10">
    <property type="entry name" value="Nucleoside Triphosphate Pyrophosphohydrolase"/>
    <property type="match status" value="1"/>
</dbReference>
<dbReference type="InterPro" id="IPR016706">
    <property type="entry name" value="Cleav_polyA_spec_factor_su5"/>
</dbReference>
<dbReference type="InterPro" id="IPR015797">
    <property type="entry name" value="NUDIX_hydrolase-like_dom_sf"/>
</dbReference>
<dbReference type="InterPro" id="IPR000086">
    <property type="entry name" value="NUDIX_hydrolase_dom"/>
</dbReference>
<dbReference type="PANTHER" id="PTHR13047">
    <property type="entry name" value="PRE-MRNA CLEAVAGE FACTOR IM, 25KD SUBUNIT"/>
    <property type="match status" value="1"/>
</dbReference>
<dbReference type="Pfam" id="PF13869">
    <property type="entry name" value="NUDIX_2"/>
    <property type="match status" value="1"/>
</dbReference>
<dbReference type="PIRSF" id="PIRSF017888">
    <property type="entry name" value="CPSF-25"/>
    <property type="match status" value="1"/>
</dbReference>
<dbReference type="SUPFAM" id="SSF55811">
    <property type="entry name" value="Nudix"/>
    <property type="match status" value="1"/>
</dbReference>
<dbReference type="PROSITE" id="PS51462">
    <property type="entry name" value="NUDIX"/>
    <property type="match status" value="1"/>
</dbReference>
<keyword id="KW-0963">Cytoplasm</keyword>
<keyword id="KW-0221">Differentiation</keyword>
<keyword id="KW-0507">mRNA processing</keyword>
<keyword id="KW-0539">Nucleus</keyword>
<keyword id="KW-1185">Reference proteome</keyword>
<keyword id="KW-0694">RNA-binding</keyword>
<accession>Q6DJE4</accession>